<gene>
    <name evidence="1" type="primary">yceH</name>
    <name type="ordered locus">EcolC_2533</name>
</gene>
<feature type="chain" id="PRO_1000087944" description="UPF0502 protein YceH">
    <location>
        <begin position="1"/>
        <end position="215"/>
    </location>
</feature>
<feature type="modified residue" description="N6-acetyllysine" evidence="1">
    <location>
        <position position="80"/>
    </location>
</feature>
<dbReference type="EMBL" id="CP000946">
    <property type="protein sequence ID" value="ACA78164.1"/>
    <property type="molecule type" value="Genomic_DNA"/>
</dbReference>
<dbReference type="RefSeq" id="WP_000877116.1">
    <property type="nucleotide sequence ID" value="NZ_MTFT01000032.1"/>
</dbReference>
<dbReference type="SMR" id="B1IV35"/>
<dbReference type="KEGG" id="ecl:EcolC_2533"/>
<dbReference type="HOGENOM" id="CLU_057831_2_0_6"/>
<dbReference type="FunFam" id="1.10.10.10:FF:000196">
    <property type="entry name" value="UPF0502 protein YceH"/>
    <property type="match status" value="1"/>
</dbReference>
<dbReference type="FunFam" id="1.10.10.10:FF:000241">
    <property type="entry name" value="UPF0502 protein YceH"/>
    <property type="match status" value="1"/>
</dbReference>
<dbReference type="Gene3D" id="1.10.10.10">
    <property type="entry name" value="Winged helix-like DNA-binding domain superfamily/Winged helix DNA-binding domain"/>
    <property type="match status" value="2"/>
</dbReference>
<dbReference type="HAMAP" id="MF_01584">
    <property type="entry name" value="UPF0502"/>
    <property type="match status" value="1"/>
</dbReference>
<dbReference type="InterPro" id="IPR007432">
    <property type="entry name" value="DUF480"/>
</dbReference>
<dbReference type="InterPro" id="IPR036388">
    <property type="entry name" value="WH-like_DNA-bd_sf"/>
</dbReference>
<dbReference type="InterPro" id="IPR036390">
    <property type="entry name" value="WH_DNA-bd_sf"/>
</dbReference>
<dbReference type="NCBIfam" id="NF008413">
    <property type="entry name" value="PRK11239.1"/>
    <property type="match status" value="1"/>
</dbReference>
<dbReference type="PANTHER" id="PTHR38768">
    <property type="entry name" value="UPF0502 PROTEIN YCEH"/>
    <property type="match status" value="1"/>
</dbReference>
<dbReference type="PANTHER" id="PTHR38768:SF1">
    <property type="entry name" value="UPF0502 PROTEIN YCEH"/>
    <property type="match status" value="1"/>
</dbReference>
<dbReference type="Pfam" id="PF04337">
    <property type="entry name" value="DUF480"/>
    <property type="match status" value="1"/>
</dbReference>
<dbReference type="SUPFAM" id="SSF46785">
    <property type="entry name" value="Winged helix' DNA-binding domain"/>
    <property type="match status" value="2"/>
</dbReference>
<accession>B1IV35</accession>
<protein>
    <recommendedName>
        <fullName evidence="1">UPF0502 protein YceH</fullName>
    </recommendedName>
</protein>
<sequence>MKYQLTALEARVIGCLLEKQVTTPEQYPLSVNGVVTACNQKTNREPVMNLSESEVQEQLDNLVKRHYLRTVSGFGNRVTKYEQRFCNSEFGDLKLSAAEVALITTLLLRGAQTPGELRSRAARMYEFSDMAEVESTLEQLANREDGPFVVRLAREPGKRESRYMHLFSGEVEDQPAVTDMSNAVDGDLQARVEALEIEVAELKQRLDSLLAHLGD</sequence>
<comment type="similarity">
    <text evidence="1">Belongs to the UPF0502 family.</text>
</comment>
<reference key="1">
    <citation type="submission" date="2008-02" db="EMBL/GenBank/DDBJ databases">
        <title>Complete sequence of Escherichia coli C str. ATCC 8739.</title>
        <authorList>
            <person name="Copeland A."/>
            <person name="Lucas S."/>
            <person name="Lapidus A."/>
            <person name="Glavina del Rio T."/>
            <person name="Dalin E."/>
            <person name="Tice H."/>
            <person name="Bruce D."/>
            <person name="Goodwin L."/>
            <person name="Pitluck S."/>
            <person name="Kiss H."/>
            <person name="Brettin T."/>
            <person name="Detter J.C."/>
            <person name="Han C."/>
            <person name="Kuske C.R."/>
            <person name="Schmutz J."/>
            <person name="Larimer F."/>
            <person name="Land M."/>
            <person name="Hauser L."/>
            <person name="Kyrpides N."/>
            <person name="Mikhailova N."/>
            <person name="Ingram L."/>
            <person name="Richardson P."/>
        </authorList>
    </citation>
    <scope>NUCLEOTIDE SEQUENCE [LARGE SCALE GENOMIC DNA]</scope>
    <source>
        <strain>ATCC 8739 / DSM 1576 / NBRC 3972 / NCIMB 8545 / WDCM 00012 / Crooks</strain>
    </source>
</reference>
<organism>
    <name type="scientific">Escherichia coli (strain ATCC 8739 / DSM 1576 / NBRC 3972 / NCIMB 8545 / WDCM 00012 / Crooks)</name>
    <dbReference type="NCBI Taxonomy" id="481805"/>
    <lineage>
        <taxon>Bacteria</taxon>
        <taxon>Pseudomonadati</taxon>
        <taxon>Pseudomonadota</taxon>
        <taxon>Gammaproteobacteria</taxon>
        <taxon>Enterobacterales</taxon>
        <taxon>Enterobacteriaceae</taxon>
        <taxon>Escherichia</taxon>
    </lineage>
</organism>
<name>YCEH_ECOLC</name>
<proteinExistence type="inferred from homology"/>
<keyword id="KW-0007">Acetylation</keyword>
<evidence type="ECO:0000255" key="1">
    <source>
        <dbReference type="HAMAP-Rule" id="MF_01584"/>
    </source>
</evidence>